<dbReference type="EMBL" id="AF399709">
    <property type="protein sequence ID" value="AAK81732.1"/>
    <property type="molecule type" value="mRNA"/>
</dbReference>
<dbReference type="EMBL" id="JOJR01000021">
    <property type="protein sequence ID" value="RCN50646.1"/>
    <property type="status" value="ALT_SEQ"/>
    <property type="molecule type" value="Genomic_DNA"/>
</dbReference>
<dbReference type="EMBL" id="JOJR01000021">
    <property type="protein sequence ID" value="RCN50647.1"/>
    <property type="status" value="ALT_SEQ"/>
    <property type="molecule type" value="Genomic_DNA"/>
</dbReference>
<dbReference type="PDB" id="4TPV">
    <property type="method" value="X-ray"/>
    <property type="resolution" value="1.60 A"/>
    <property type="chains" value="A/B=20-198"/>
</dbReference>
<dbReference type="PDBsum" id="4TPV"/>
<dbReference type="SMR" id="Q962V9"/>
<dbReference type="STRING" id="29170.A0A368H209"/>
<dbReference type="OrthoDB" id="5878138at2759"/>
<dbReference type="EvolutionaryTrace" id="Q962V9"/>
<dbReference type="Proteomes" id="UP000252519">
    <property type="component" value="Unassembled WGS sequence"/>
</dbReference>
<dbReference type="GO" id="GO:0005576">
    <property type="term" value="C:extracellular region"/>
    <property type="evidence" value="ECO:0007669"/>
    <property type="project" value="UniProtKB-SubCell"/>
</dbReference>
<dbReference type="GO" id="GO:0090729">
    <property type="term" value="F:toxin activity"/>
    <property type="evidence" value="ECO:0007669"/>
    <property type="project" value="UniProtKB-KW"/>
</dbReference>
<dbReference type="CDD" id="cd05380">
    <property type="entry name" value="CAP_euk"/>
    <property type="match status" value="1"/>
</dbReference>
<dbReference type="Gene3D" id="3.40.33.10">
    <property type="entry name" value="CAP"/>
    <property type="match status" value="1"/>
</dbReference>
<dbReference type="InterPro" id="IPR014044">
    <property type="entry name" value="CAP_dom"/>
</dbReference>
<dbReference type="InterPro" id="IPR035940">
    <property type="entry name" value="CAP_sf"/>
</dbReference>
<dbReference type="InterPro" id="IPR001283">
    <property type="entry name" value="CRISP-related"/>
</dbReference>
<dbReference type="PANTHER" id="PTHR10334">
    <property type="entry name" value="CYSTEINE-RICH SECRETORY PROTEIN-RELATED"/>
    <property type="match status" value="1"/>
</dbReference>
<dbReference type="Pfam" id="PF00188">
    <property type="entry name" value="CAP"/>
    <property type="match status" value="1"/>
</dbReference>
<dbReference type="SMART" id="SM00198">
    <property type="entry name" value="SCP"/>
    <property type="match status" value="1"/>
</dbReference>
<dbReference type="SUPFAM" id="SSF55797">
    <property type="entry name" value="PR-1-like"/>
    <property type="match status" value="1"/>
</dbReference>
<feature type="signal peptide" evidence="1">
    <location>
        <begin position="1"/>
        <end position="17"/>
    </location>
</feature>
<feature type="chain" id="PRO_0000456093" description="Hookworm platelet inhibitor 1" evidence="10">
    <location>
        <begin position="18"/>
        <end position="198"/>
    </location>
</feature>
<feature type="disulfide bond" evidence="4 15">
    <location>
        <begin position="24"/>
        <end position="65"/>
    </location>
</feature>
<feature type="disulfide bond" evidence="4 15">
    <location>
        <begin position="78"/>
        <end position="146"/>
    </location>
</feature>
<feature type="disulfide bond" evidence="4 15">
    <location>
        <begin position="141"/>
        <end position="154"/>
    </location>
</feature>
<feature type="disulfide bond" evidence="4 15">
    <location>
        <begin position="174"/>
        <end position="186"/>
    </location>
</feature>
<feature type="disulfide bond" evidence="4 15">
    <location>
        <begin position="177"/>
        <end position="195"/>
    </location>
</feature>
<feature type="sequence conflict" description="In Ref. 3; RCN50647." evidence="8" ref="3">
    <original>YDC</original>
    <variation>SRH</variation>
    <location>
        <begin position="63"/>
        <end position="65"/>
    </location>
</feature>
<feature type="helix" evidence="16">
    <location>
        <begin position="32"/>
        <end position="53"/>
    </location>
</feature>
<feature type="helix" evidence="16">
    <location>
        <begin position="65"/>
        <end position="75"/>
    </location>
</feature>
<feature type="strand" evidence="16">
    <location>
        <begin position="87"/>
        <end position="94"/>
    </location>
</feature>
<feature type="helix" evidence="16">
    <location>
        <begin position="99"/>
        <end position="108"/>
    </location>
</feature>
<feature type="helix" evidence="16">
    <location>
        <begin position="109"/>
        <end position="113"/>
    </location>
</feature>
<feature type="strand" evidence="16">
    <location>
        <begin position="116"/>
        <end position="118"/>
    </location>
</feature>
<feature type="strand" evidence="16">
    <location>
        <begin position="122"/>
        <end position="125"/>
    </location>
</feature>
<feature type="helix" evidence="16">
    <location>
        <begin position="126"/>
        <end position="132"/>
    </location>
</feature>
<feature type="strand" evidence="16">
    <location>
        <begin position="138"/>
        <end position="146"/>
    </location>
</feature>
<feature type="strand" evidence="16">
    <location>
        <begin position="149"/>
        <end position="159"/>
    </location>
</feature>
<feature type="strand" evidence="16">
    <location>
        <begin position="170"/>
        <end position="172"/>
    </location>
</feature>
<feature type="turn" evidence="16">
    <location>
        <begin position="173"/>
        <end position="176"/>
    </location>
</feature>
<feature type="helix" evidence="16">
    <location>
        <begin position="177"/>
        <end position="180"/>
    </location>
</feature>
<feature type="helix" evidence="16">
    <location>
        <begin position="188"/>
        <end position="190"/>
    </location>
</feature>
<feature type="strand" evidence="16">
    <location>
        <begin position="194"/>
        <end position="196"/>
    </location>
</feature>
<accession>Q962V9</accession>
<accession>A0A368H209</accession>
<accession>A0A368H5V4</accession>
<sequence length="198" mass="22147">MSSYLLVLVAILGFAYAEGDYSLCQQREKLDDDMREMFTELHNGYRAAFARNYKTSKMRTMVYDCTLEEKAYKSAEKCSEEPSSEEENVDVFSAATLNIPLEAGNSWWSEIFELRGKVYNKNGKTSNIANMVWDSHDKLGCAVVDCSGKTHVVCQYGPEAKGDGKTIYEEGAPCSRCSDYGAGVTCDDDWQNLLCIGH</sequence>
<name>HPI_ANCCA</name>
<gene>
    <name evidence="13" type="ORF">ANCCAN_03259</name>
</gene>
<organism>
    <name type="scientific">Ancylostoma caninum</name>
    <name type="common">Dog hookworm</name>
    <dbReference type="NCBI Taxonomy" id="29170"/>
    <lineage>
        <taxon>Eukaryota</taxon>
        <taxon>Metazoa</taxon>
        <taxon>Ecdysozoa</taxon>
        <taxon>Nematoda</taxon>
        <taxon>Chromadorea</taxon>
        <taxon>Rhabditida</taxon>
        <taxon>Rhabditina</taxon>
        <taxon>Rhabditomorpha</taxon>
        <taxon>Strongyloidea</taxon>
        <taxon>Ancylostomatidae</taxon>
        <taxon>Ancylostomatinae</taxon>
        <taxon>Ancylostoma</taxon>
    </lineage>
</organism>
<evidence type="ECO:0000255" key="1"/>
<evidence type="ECO:0000269" key="2">
    <source>
    </source>
</evidence>
<evidence type="ECO:0000269" key="3">
    <source>
    </source>
</evidence>
<evidence type="ECO:0000269" key="4">
    <source>
    </source>
</evidence>
<evidence type="ECO:0000303" key="5">
    <source>
    </source>
</evidence>
<evidence type="ECO:0000303" key="6">
    <source>
    </source>
</evidence>
<evidence type="ECO:0000303" key="7">
    <source>
    </source>
</evidence>
<evidence type="ECO:0000305" key="8"/>
<evidence type="ECO:0000305" key="9">
    <source>
    </source>
</evidence>
<evidence type="ECO:0000305" key="10">
    <source>
    </source>
</evidence>
<evidence type="ECO:0000305" key="11">
    <source>
    </source>
</evidence>
<evidence type="ECO:0000312" key="12">
    <source>
        <dbReference type="EMBL" id="AAK81732.1"/>
    </source>
</evidence>
<evidence type="ECO:0000312" key="13">
    <source>
        <dbReference type="EMBL" id="RCN50646.1"/>
    </source>
</evidence>
<evidence type="ECO:0000312" key="14">
    <source>
        <dbReference type="Proteomes" id="UP000252519"/>
    </source>
</evidence>
<evidence type="ECO:0007744" key="15">
    <source>
        <dbReference type="PDB" id="4TPV"/>
    </source>
</evidence>
<evidence type="ECO:0007829" key="16">
    <source>
        <dbReference type="PDB" id="4TPV"/>
    </source>
</evidence>
<protein>
    <recommendedName>
        <fullName evidence="5 6 7">Hookworm platelet inhibitor 1</fullName>
        <shortName evidence="5 6 7">HPI-1</shortName>
    </recommendedName>
</protein>
<proteinExistence type="evidence at protein level"/>
<keyword id="KW-0002">3D-structure</keyword>
<keyword id="KW-0903">Direct protein sequencing</keyword>
<keyword id="KW-1015">Disulfide bond</keyword>
<keyword id="KW-1199">Hemostasis impairing toxin</keyword>
<keyword id="KW-1201">Platelet aggregation inhibiting toxin</keyword>
<keyword id="KW-1185">Reference proteome</keyword>
<keyword id="KW-0964">Secreted</keyword>
<keyword id="KW-0732">Signal</keyword>
<keyword id="KW-0800">Toxin</keyword>
<comment type="function">
    <text evidence="2 4">Hookworms inhibitor of platelet aggregation and adhesion (PubMed:10191228). Native protein inhibits platelet aggregation induced by ADP, epinephrine, and thrombin (PubMed:10191228). In addition, it prevents adhesion of resting platelets to immobilized fibrinogen and collagen (PubMed:10191228). May act by binding to glycoprotein IIb/IIIa (ITGA2B/ITGB3) and integrin alpha-2/beta-1 (ITGA1/ITGB1), respectively (PubMed:10191228). It is noteworthy that the recombinant protein fails to inhibit binding to fibrinogen (through ITGA2B/ITGB3) and collagen (through ITGA1/ITGB1) (PubMed:10191228, PubMed:26057788).</text>
</comment>
<comment type="subunit">
    <text evidence="9 10 11">Monomer.</text>
</comment>
<comment type="subcellular location">
    <subcellularLocation>
        <location evidence="2 3">Secreted</location>
    </subcellularLocation>
</comment>
<comment type="tissue specificity">
    <text evidence="3">Detected in cephalic glands.</text>
</comment>
<comment type="developmental stage">
    <text evidence="10">Expressed in adult stage.</text>
</comment>
<comment type="miscellaneous">
    <text evidence="11">The RGD motif is not positioned at the apex of a tight turn, making it unlikely to interact with the integrin.</text>
</comment>
<comment type="similarity">
    <text evidence="8">Belongs to the CRISP family.</text>
</comment>
<comment type="sequence caution" evidence="8">
    <conflict type="erroneous gene model prediction">
        <sequence resource="EMBL-CDS" id="RCN50646"/>
    </conflict>
</comment>
<comment type="sequence caution" evidence="8">
    <conflict type="erroneous gene model prediction">
        <sequence resource="EMBL-CDS" id="RCN50647"/>
    </conflict>
</comment>
<reference key="1">
    <citation type="journal article" date="2003" name="Mol. Biochem. Parasitol.">
        <title>Isolation and molecular cloning of a secreted hookworm platelet inhibitor from adult Ancylostoma caninum.</title>
        <authorList>
            <person name="Del Valle A."/>
            <person name="Jones B.F."/>
            <person name="Harrison L.M."/>
            <person name="Chadderdon R.C."/>
            <person name="Cappello M."/>
        </authorList>
    </citation>
    <scope>NUCLEOTIDE SEQUENCE [MRNA]</scope>
    <scope>PROTEIN SEQUENCE OF 18-47 AND 126-132</scope>
    <scope>RECOMBINANT EXPRESSION</scope>
    <scope>SUBCELLULAR LOCATION</scope>
    <scope>TISSUE SPECIFICITY</scope>
    <scope>DEVELOPMENTAL STAGE</scope>
</reference>
<reference evidence="12" key="2">
    <citation type="submission" date="2001-07" db="EMBL/GenBank/DDBJ databases">
        <title>Cloning of the hookworm platelet inhibitor (HPI) from adult Ancylostoma caninum.</title>
        <authorList>
            <person name="DelValle A."/>
            <person name="Harrison L.M."/>
            <person name="Cappello M."/>
        </authorList>
    </citation>
    <scope>NUCLEOTIDE SEQUENCE [MRNA] OF 18-198</scope>
</reference>
<reference evidence="13 14" key="3">
    <citation type="submission" date="2014-10" db="EMBL/GenBank/DDBJ databases">
        <title>Draft genome of the hookworm Ancylostoma caninum.</title>
        <authorList>
            <person name="Mitreva M."/>
        </authorList>
    </citation>
    <scope>NUCLEOTIDE SEQUENCE [LARGE SCALE GENOMIC DNA]</scope>
    <source>
        <strain>Baltimore</strain>
    </source>
</reference>
<reference key="4">
    <citation type="journal article" date="1999" name="J. Infect. Dis.">
        <title>The hookworm platelet inhibitor: functional blockade of integrins GPIIb/IIIa (alphaIIbbeta3) and GPIa/IIa (alpha2beta1) inhibits platelet aggregation and adhesion in vitro.</title>
        <authorList>
            <person name="Chadderdon R.C."/>
            <person name="Cappello M."/>
        </authorList>
    </citation>
    <scope>FUNCTION</scope>
    <scope>SUBCELLULAR LOCATION</scope>
</reference>
<reference evidence="15" key="5">
    <citation type="journal article" date="2015" name="Acta Crystallogr. F Struct. Biol. Commun.">
        <title>The structure of hookworm platelet inhibitor (HPI), a CAP superfamily member from Ancylostoma caninum.</title>
        <authorList>
            <person name="Ma D."/>
            <person name="Francischetti I.M."/>
            <person name="Ribeiro J.M."/>
            <person name="Andersen J.F."/>
        </authorList>
    </citation>
    <scope>X-RAY CRYSTALLOGRAPHY (1.60 ANGSTROMS) OF 20-198</scope>
    <scope>DISULFIDE BONDS</scope>
    <scope>RECOMBINANT EXPRESSION</scope>
    <scope>FUNCTION</scope>
</reference>